<dbReference type="EMBL" id="AAFI02000035">
    <property type="protein sequence ID" value="EAL67383.2"/>
    <property type="molecule type" value="Genomic_DNA"/>
</dbReference>
<dbReference type="EMBL" id="BJ428355">
    <property type="status" value="NOT_ANNOTATED_CDS"/>
    <property type="molecule type" value="mRNA"/>
</dbReference>
<dbReference type="RefSeq" id="XP_641369.2">
    <property type="nucleotide sequence ID" value="XM_636277.2"/>
</dbReference>
<dbReference type="SMR" id="Q54VI6"/>
<dbReference type="FunCoup" id="Q54VI6">
    <property type="interactions" value="277"/>
</dbReference>
<dbReference type="STRING" id="44689.Q54VI6"/>
<dbReference type="GlyCosmos" id="Q54VI6">
    <property type="glycosylation" value="1 site, No reported glycans"/>
</dbReference>
<dbReference type="GlyGen" id="Q54VI6">
    <property type="glycosylation" value="1 site"/>
</dbReference>
<dbReference type="PaxDb" id="44689-DDB0266464"/>
<dbReference type="EnsemblProtists" id="EAL67383">
    <property type="protein sequence ID" value="EAL67383"/>
    <property type="gene ID" value="DDB_G0280313"/>
</dbReference>
<dbReference type="GeneID" id="8622503"/>
<dbReference type="KEGG" id="ddi:DDB_G0280313"/>
<dbReference type="dictyBase" id="DDB_G0280313">
    <property type="gene designation" value="ssr2"/>
</dbReference>
<dbReference type="VEuPathDB" id="AmoebaDB:DDB_G0280313"/>
<dbReference type="eggNOG" id="KOG3317">
    <property type="taxonomic scope" value="Eukaryota"/>
</dbReference>
<dbReference type="HOGENOM" id="CLU_102025_1_0_1"/>
<dbReference type="InParanoid" id="Q54VI6"/>
<dbReference type="OMA" id="YGFFNYT"/>
<dbReference type="PhylomeDB" id="Q54VI6"/>
<dbReference type="PRO" id="PR:Q54VI6"/>
<dbReference type="Proteomes" id="UP000002195">
    <property type="component" value="Chromosome 3"/>
</dbReference>
<dbReference type="GO" id="GO:0005789">
    <property type="term" value="C:endoplasmic reticulum membrane"/>
    <property type="evidence" value="ECO:0007669"/>
    <property type="project" value="UniProtKB-SubCell"/>
</dbReference>
<dbReference type="GO" id="GO:0045335">
    <property type="term" value="C:phagocytic vesicle"/>
    <property type="evidence" value="ECO:0007005"/>
    <property type="project" value="dictyBase"/>
</dbReference>
<dbReference type="InterPro" id="IPR008856">
    <property type="entry name" value="TRAP_beta"/>
</dbReference>
<dbReference type="PANTHER" id="PTHR12861:SF3">
    <property type="entry name" value="TRANSLOCON-ASSOCIATED PROTEIN SUBUNIT BETA"/>
    <property type="match status" value="1"/>
</dbReference>
<dbReference type="PANTHER" id="PTHR12861">
    <property type="entry name" value="TRANSLOCON-ASSOCIATED PROTEIN, BETA SUBUNIT PRECURSOR TRAP-BETA SIGNAL SEQUENCE RECEPTOR BETA SUBUNIT"/>
    <property type="match status" value="1"/>
</dbReference>
<dbReference type="Pfam" id="PF05753">
    <property type="entry name" value="TRAP_beta"/>
    <property type="match status" value="1"/>
</dbReference>
<dbReference type="PIRSF" id="PIRSF016400">
    <property type="entry name" value="TRAP_beta"/>
    <property type="match status" value="1"/>
</dbReference>
<organism>
    <name type="scientific">Dictyostelium discoideum</name>
    <name type="common">Social amoeba</name>
    <dbReference type="NCBI Taxonomy" id="44689"/>
    <lineage>
        <taxon>Eukaryota</taxon>
        <taxon>Amoebozoa</taxon>
        <taxon>Evosea</taxon>
        <taxon>Eumycetozoa</taxon>
        <taxon>Dictyostelia</taxon>
        <taxon>Dictyosteliales</taxon>
        <taxon>Dictyosteliaceae</taxon>
        <taxon>Dictyostelium</taxon>
    </lineage>
</organism>
<proteinExistence type="evidence at transcript level"/>
<feature type="signal peptide" evidence="2">
    <location>
        <begin position="1"/>
        <end position="20"/>
    </location>
</feature>
<feature type="chain" id="PRO_0000328897" description="Translocon-associated protein subunit beta">
    <location>
        <begin position="21"/>
        <end position="184"/>
    </location>
</feature>
<feature type="topological domain" description="Lumenal" evidence="2">
    <location>
        <begin position="21"/>
        <end position="147"/>
    </location>
</feature>
<feature type="transmembrane region" description="Helical" evidence="2">
    <location>
        <begin position="148"/>
        <end position="168"/>
    </location>
</feature>
<feature type="topological domain" description="Cytoplasmic" evidence="2">
    <location>
        <begin position="169"/>
        <end position="184"/>
    </location>
</feature>
<feature type="glycosylation site" description="N-linked (GlcNAc...) asparagine" evidence="2">
    <location>
        <position position="94"/>
    </location>
</feature>
<accession>Q54VI6</accession>
<evidence type="ECO:0000250" key="1"/>
<evidence type="ECO:0000255" key="2"/>
<evidence type="ECO:0000305" key="3"/>
<comment type="function">
    <text evidence="1">TRAP proteins are part of a complex whose function is to bind calcium to the ER membrane and thereby regulate the retention of ER resident proteins.</text>
</comment>
<comment type="subunit">
    <text evidence="3">Heterotrimer of TRAP-alpha, TRAP-beta and TRAP-gamma.</text>
</comment>
<comment type="subcellular location">
    <subcellularLocation>
        <location evidence="1">Endoplasmic reticulum membrane</location>
        <topology evidence="1">Single-pass type I membrane protein</topology>
    </subcellularLocation>
</comment>
<comment type="similarity">
    <text evidence="3">Belongs to the TRAP-beta family.</text>
</comment>
<gene>
    <name type="primary">ssr2</name>
    <name type="ORF">DDB_G0280313</name>
</gene>
<sequence>MNFKTVISLFLVLFVSFVYCENGAELLFHKKIVEGPVVGKELPIQFIIYNVGSEPAYDISFIDNDFSNAEFEFVSGSSEGKWETLAPNSQVQTNLTVIPKKSGIYSLTSTVLNYRKTQTSSEFTVSSAASYSGMYVESQADYEKRTSLLIKEWITFFVLCAGAIALPYSISTYYKKNYENGIKK</sequence>
<protein>
    <recommendedName>
        <fullName>Translocon-associated protein subunit beta</fullName>
        <shortName>TRAP-beta</shortName>
    </recommendedName>
    <alternativeName>
        <fullName>Signal sequence receptor subunit beta</fullName>
        <shortName>SSR-beta</shortName>
    </alternativeName>
</protein>
<keyword id="KW-0256">Endoplasmic reticulum</keyword>
<keyword id="KW-0325">Glycoprotein</keyword>
<keyword id="KW-0472">Membrane</keyword>
<keyword id="KW-1185">Reference proteome</keyword>
<keyword id="KW-0732">Signal</keyword>
<keyword id="KW-0812">Transmembrane</keyword>
<keyword id="KW-1133">Transmembrane helix</keyword>
<reference key="1">
    <citation type="journal article" date="2005" name="Nature">
        <title>The genome of the social amoeba Dictyostelium discoideum.</title>
        <authorList>
            <person name="Eichinger L."/>
            <person name="Pachebat J.A."/>
            <person name="Gloeckner G."/>
            <person name="Rajandream M.A."/>
            <person name="Sucgang R."/>
            <person name="Berriman M."/>
            <person name="Song J."/>
            <person name="Olsen R."/>
            <person name="Szafranski K."/>
            <person name="Xu Q."/>
            <person name="Tunggal B."/>
            <person name="Kummerfeld S."/>
            <person name="Madera M."/>
            <person name="Konfortov B.A."/>
            <person name="Rivero F."/>
            <person name="Bankier A.T."/>
            <person name="Lehmann R."/>
            <person name="Hamlin N."/>
            <person name="Davies R."/>
            <person name="Gaudet P."/>
            <person name="Fey P."/>
            <person name="Pilcher K."/>
            <person name="Chen G."/>
            <person name="Saunders D."/>
            <person name="Sodergren E.J."/>
            <person name="Davis P."/>
            <person name="Kerhornou A."/>
            <person name="Nie X."/>
            <person name="Hall N."/>
            <person name="Anjard C."/>
            <person name="Hemphill L."/>
            <person name="Bason N."/>
            <person name="Farbrother P."/>
            <person name="Desany B."/>
            <person name="Just E."/>
            <person name="Morio T."/>
            <person name="Rost R."/>
            <person name="Churcher C.M."/>
            <person name="Cooper J."/>
            <person name="Haydock S."/>
            <person name="van Driessche N."/>
            <person name="Cronin A."/>
            <person name="Goodhead I."/>
            <person name="Muzny D.M."/>
            <person name="Mourier T."/>
            <person name="Pain A."/>
            <person name="Lu M."/>
            <person name="Harper D."/>
            <person name="Lindsay R."/>
            <person name="Hauser H."/>
            <person name="James K.D."/>
            <person name="Quiles M."/>
            <person name="Madan Babu M."/>
            <person name="Saito T."/>
            <person name="Buchrieser C."/>
            <person name="Wardroper A."/>
            <person name="Felder M."/>
            <person name="Thangavelu M."/>
            <person name="Johnson D."/>
            <person name="Knights A."/>
            <person name="Loulseged H."/>
            <person name="Mungall K.L."/>
            <person name="Oliver K."/>
            <person name="Price C."/>
            <person name="Quail M.A."/>
            <person name="Urushihara H."/>
            <person name="Hernandez J."/>
            <person name="Rabbinowitsch E."/>
            <person name="Steffen D."/>
            <person name="Sanders M."/>
            <person name="Ma J."/>
            <person name="Kohara Y."/>
            <person name="Sharp S."/>
            <person name="Simmonds M.N."/>
            <person name="Spiegler S."/>
            <person name="Tivey A."/>
            <person name="Sugano S."/>
            <person name="White B."/>
            <person name="Walker D."/>
            <person name="Woodward J.R."/>
            <person name="Winckler T."/>
            <person name="Tanaka Y."/>
            <person name="Shaulsky G."/>
            <person name="Schleicher M."/>
            <person name="Weinstock G.M."/>
            <person name="Rosenthal A."/>
            <person name="Cox E.C."/>
            <person name="Chisholm R.L."/>
            <person name="Gibbs R.A."/>
            <person name="Loomis W.F."/>
            <person name="Platzer M."/>
            <person name="Kay R.R."/>
            <person name="Williams J.G."/>
            <person name="Dear P.H."/>
            <person name="Noegel A.A."/>
            <person name="Barrell B.G."/>
            <person name="Kuspa A."/>
        </authorList>
    </citation>
    <scope>NUCLEOTIDE SEQUENCE [LARGE SCALE GENOMIC DNA]</scope>
    <source>
        <strain>AX4</strain>
    </source>
</reference>
<reference key="2">
    <citation type="journal article" date="2004" name="Nucleic Acids Res.">
        <title>Analyses of cDNAs from growth and slug stages of Dictyostelium discoideum.</title>
        <authorList>
            <person name="Urushihara H."/>
            <person name="Morio T."/>
            <person name="Saito T."/>
            <person name="Kohara Y."/>
            <person name="Koriki E."/>
            <person name="Ochiai H."/>
            <person name="Maeda M."/>
            <person name="Williams J.G."/>
            <person name="Takeuchi I."/>
            <person name="Tanaka Y."/>
        </authorList>
    </citation>
    <scope>NUCLEOTIDE SEQUENCE [LARGE SCALE MRNA]</scope>
    <source>
        <strain>AX4</strain>
    </source>
</reference>
<name>SSRB_DICDI</name>